<evidence type="ECO:0000250" key="1"/>
<evidence type="ECO:0000305" key="2"/>
<evidence type="ECO:0007829" key="3">
    <source>
        <dbReference type="PDB" id="1SUM"/>
    </source>
</evidence>
<comment type="function">
    <text evidence="1">Plays a role in the regulation of phosphate uptake.</text>
</comment>
<comment type="subunit">
    <text evidence="1">Homodimer.</text>
</comment>
<comment type="subcellular location">
    <subcellularLocation>
        <location evidence="1">Cytoplasm</location>
    </subcellularLocation>
</comment>
<comment type="similarity">
    <text evidence="2">Belongs to the PhoU family.</text>
</comment>
<dbReference type="EMBL" id="AE000512">
    <property type="protein sequence ID" value="AAD36799.1"/>
    <property type="molecule type" value="Genomic_DNA"/>
</dbReference>
<dbReference type="PIR" id="E72217">
    <property type="entry name" value="E72217"/>
</dbReference>
<dbReference type="RefSeq" id="NP_229532.1">
    <property type="nucleotide sequence ID" value="NC_000853.1"/>
</dbReference>
<dbReference type="PDB" id="1SUM">
    <property type="method" value="X-ray"/>
    <property type="resolution" value="2.00 A"/>
    <property type="chains" value="B=1-235"/>
</dbReference>
<dbReference type="PDBsum" id="1SUM"/>
<dbReference type="SMR" id="Q9X256"/>
<dbReference type="STRING" id="243274.TM_1734"/>
<dbReference type="PaxDb" id="243274-THEMA_05565"/>
<dbReference type="EnsemblBacteria" id="AAD36799">
    <property type="protein sequence ID" value="AAD36799"/>
    <property type="gene ID" value="TM_1734"/>
</dbReference>
<dbReference type="KEGG" id="tma:TM1734"/>
<dbReference type="KEGG" id="tmi:THEMA_05565"/>
<dbReference type="KEGG" id="tmm:Tmari_1742"/>
<dbReference type="KEGG" id="tmw:THMA_1776"/>
<dbReference type="eggNOG" id="COG0704">
    <property type="taxonomic scope" value="Bacteria"/>
</dbReference>
<dbReference type="InParanoid" id="Q9X256"/>
<dbReference type="OrthoDB" id="45908at2"/>
<dbReference type="EvolutionaryTrace" id="Q9X256"/>
<dbReference type="Proteomes" id="UP000008183">
    <property type="component" value="Chromosome"/>
</dbReference>
<dbReference type="GO" id="GO:0005737">
    <property type="term" value="C:cytoplasm"/>
    <property type="evidence" value="ECO:0000250"/>
    <property type="project" value="UniProtKB"/>
</dbReference>
<dbReference type="GO" id="GO:0042803">
    <property type="term" value="F:protein homodimerization activity"/>
    <property type="evidence" value="ECO:0000250"/>
    <property type="project" value="UniProtKB"/>
</dbReference>
<dbReference type="GO" id="GO:0030643">
    <property type="term" value="P:intracellular phosphate ion homeostasis"/>
    <property type="evidence" value="ECO:0007669"/>
    <property type="project" value="InterPro"/>
</dbReference>
<dbReference type="GO" id="GO:0045936">
    <property type="term" value="P:negative regulation of phosphate metabolic process"/>
    <property type="evidence" value="ECO:0000250"/>
    <property type="project" value="UniProtKB"/>
</dbReference>
<dbReference type="GO" id="GO:2000186">
    <property type="term" value="P:negative regulation of phosphate transmembrane transport"/>
    <property type="evidence" value="ECO:0000250"/>
    <property type="project" value="UniProtKB"/>
</dbReference>
<dbReference type="GO" id="GO:0006817">
    <property type="term" value="P:phosphate ion transport"/>
    <property type="evidence" value="ECO:0007669"/>
    <property type="project" value="UniProtKB-KW"/>
</dbReference>
<dbReference type="FunFam" id="1.20.58.220:FF:000004">
    <property type="entry name" value="Phosphate-specific transport system accessory protein PhoU"/>
    <property type="match status" value="1"/>
</dbReference>
<dbReference type="Gene3D" id="1.20.58.220">
    <property type="entry name" value="Phosphate transport system protein phou homolog 2, domain 2"/>
    <property type="match status" value="2"/>
</dbReference>
<dbReference type="InterPro" id="IPR028366">
    <property type="entry name" value="P_transport_PhoU"/>
</dbReference>
<dbReference type="InterPro" id="IPR038078">
    <property type="entry name" value="PhoU-like_sf"/>
</dbReference>
<dbReference type="InterPro" id="IPR026022">
    <property type="entry name" value="PhoU_dom"/>
</dbReference>
<dbReference type="NCBIfam" id="TIGR02135">
    <property type="entry name" value="phoU_full"/>
    <property type="match status" value="1"/>
</dbReference>
<dbReference type="PANTHER" id="PTHR42930">
    <property type="entry name" value="PHOSPHATE-SPECIFIC TRANSPORT SYSTEM ACCESSORY PROTEIN PHOU"/>
    <property type="match status" value="1"/>
</dbReference>
<dbReference type="PANTHER" id="PTHR42930:SF3">
    <property type="entry name" value="PHOSPHATE-SPECIFIC TRANSPORT SYSTEM ACCESSORY PROTEIN PHOU"/>
    <property type="match status" value="1"/>
</dbReference>
<dbReference type="Pfam" id="PF01895">
    <property type="entry name" value="PhoU"/>
    <property type="match status" value="2"/>
</dbReference>
<dbReference type="PIRSF" id="PIRSF003107">
    <property type="entry name" value="PhoU"/>
    <property type="match status" value="1"/>
</dbReference>
<dbReference type="SUPFAM" id="SSF109755">
    <property type="entry name" value="PhoU-like"/>
    <property type="match status" value="1"/>
</dbReference>
<protein>
    <recommendedName>
        <fullName>Phosphate-specific transport system accessory protein PhoU homolog 2</fullName>
        <shortName>Pst system accessory protein PhoU homolog 2</shortName>
    </recommendedName>
    <alternativeName>
        <fullName>Phosphate uptake regulator PhoU homolog 2</fullName>
    </alternativeName>
</protein>
<organism>
    <name type="scientific">Thermotoga maritima (strain ATCC 43589 / DSM 3109 / JCM 10099 / NBRC 100826 / MSB8)</name>
    <dbReference type="NCBI Taxonomy" id="243274"/>
    <lineage>
        <taxon>Bacteria</taxon>
        <taxon>Thermotogati</taxon>
        <taxon>Thermotogota</taxon>
        <taxon>Thermotogae</taxon>
        <taxon>Thermotogales</taxon>
        <taxon>Thermotogaceae</taxon>
        <taxon>Thermotoga</taxon>
    </lineage>
</organism>
<feature type="chain" id="PRO_0000155183" description="Phosphate-specific transport system accessory protein PhoU homolog 2">
    <location>
        <begin position="1"/>
        <end position="235"/>
    </location>
</feature>
<feature type="helix" evidence="3">
    <location>
        <begin position="5"/>
        <end position="36"/>
    </location>
</feature>
<feature type="helix" evidence="3">
    <location>
        <begin position="39"/>
        <end position="70"/>
    </location>
</feature>
<feature type="helix" evidence="3">
    <location>
        <begin position="75"/>
        <end position="107"/>
    </location>
</feature>
<feature type="helix" evidence="3">
    <location>
        <begin position="118"/>
        <end position="138"/>
    </location>
</feature>
<feature type="helix" evidence="3">
    <location>
        <begin position="142"/>
        <end position="145"/>
    </location>
</feature>
<feature type="helix" evidence="3">
    <location>
        <begin position="147"/>
        <end position="172"/>
    </location>
</feature>
<feature type="helix" evidence="3">
    <location>
        <begin position="174"/>
        <end position="176"/>
    </location>
</feature>
<feature type="helix" evidence="3">
    <location>
        <begin position="177"/>
        <end position="209"/>
    </location>
</feature>
<feature type="strand" evidence="3">
    <location>
        <begin position="213"/>
        <end position="216"/>
    </location>
</feature>
<feature type="strand" evidence="3">
    <location>
        <begin position="219"/>
        <end position="222"/>
    </location>
</feature>
<sequence length="235" mass="26821">MNRLLNEKVEEFKKGVLKAGWFIEKMFRNSISSLVERNESLAREVIADEEVVDQMEVEIQEKAMEVLGLFSPIGKPLLTVTAGIRVAELIENIADKCHDIAKNVLELMEEPPLKPLEDIPAMANQTSEMLKFALRMFADVNVEKSFEVCRMDSKVDDLYEKVREELLLYMMESPKYVKRALLLLEIAGNIEIIADYATNIVEVSVYMVQGEAYKCYHDELLLFKKSGGVLFESSD</sequence>
<name>PHOU2_THEMA</name>
<reference key="1">
    <citation type="journal article" date="1999" name="Nature">
        <title>Evidence for lateral gene transfer between Archaea and Bacteria from genome sequence of Thermotoga maritima.</title>
        <authorList>
            <person name="Nelson K.E."/>
            <person name="Clayton R.A."/>
            <person name="Gill S.R."/>
            <person name="Gwinn M.L."/>
            <person name="Dodson R.J."/>
            <person name="Haft D.H."/>
            <person name="Hickey E.K."/>
            <person name="Peterson J.D."/>
            <person name="Nelson W.C."/>
            <person name="Ketchum K.A."/>
            <person name="McDonald L.A."/>
            <person name="Utterback T.R."/>
            <person name="Malek J.A."/>
            <person name="Linher K.D."/>
            <person name="Garrett M.M."/>
            <person name="Stewart A.M."/>
            <person name="Cotton M.D."/>
            <person name="Pratt M.S."/>
            <person name="Phillips C.A."/>
            <person name="Richardson D.L."/>
            <person name="Heidelberg J.F."/>
            <person name="Sutton G.G."/>
            <person name="Fleischmann R.D."/>
            <person name="Eisen J.A."/>
            <person name="White O."/>
            <person name="Salzberg S.L."/>
            <person name="Smith H.O."/>
            <person name="Venter J.C."/>
            <person name="Fraser C.M."/>
        </authorList>
    </citation>
    <scope>NUCLEOTIDE SEQUENCE [LARGE SCALE GENOMIC DNA]</scope>
    <source>
        <strain>ATCC 43589 / DSM 3109 / JCM 10099 / NBRC 100826 / MSB8</strain>
    </source>
</reference>
<reference key="2">
    <citation type="journal article" date="2005" name="J. Biol. Chem.">
        <title>Crystal structure of a PhoU protein homologue: a new class of metalloprotein containing multinuclear iron clusters.</title>
        <authorList>
            <person name="Liu J."/>
            <person name="Lou Y."/>
            <person name="Yokota H."/>
            <person name="Adams P.D."/>
            <person name="Kim R."/>
            <person name="Kim S.H."/>
        </authorList>
    </citation>
    <scope>X-RAY CRYSTALLOGRAPHY (2.00 ANGSTROMS) IN COMPLEX WITH IRON IONS AND NICKEL ION</scope>
    <source>
        <strain>ATCC 43589 / DSM 3109 / JCM 10099 / NBRC 100826 / MSB8</strain>
    </source>
</reference>
<proteinExistence type="evidence at protein level"/>
<accession>Q9X256</accession>
<keyword id="KW-0002">3D-structure</keyword>
<keyword id="KW-0963">Cytoplasm</keyword>
<keyword id="KW-0592">Phosphate transport</keyword>
<keyword id="KW-1185">Reference proteome</keyword>
<keyword id="KW-0813">Transport</keyword>
<gene>
    <name type="primary">phoU2</name>
    <name type="ordered locus">TM_1734</name>
</gene>